<proteinExistence type="inferred from homology"/>
<evidence type="ECO:0000255" key="1">
    <source>
        <dbReference type="HAMAP-Rule" id="MF_00175"/>
    </source>
</evidence>
<evidence type="ECO:0000255" key="2">
    <source>
        <dbReference type="PROSITE-ProRule" id="PRU01250"/>
    </source>
</evidence>
<keyword id="KW-0067">ATP-binding</keyword>
<keyword id="KW-0143">Chaperone</keyword>
<keyword id="KW-0479">Metal-binding</keyword>
<keyword id="KW-0547">Nucleotide-binding</keyword>
<keyword id="KW-0862">Zinc</keyword>
<name>CLPX_PSE14</name>
<reference key="1">
    <citation type="journal article" date="2005" name="J. Bacteriol.">
        <title>Whole-genome sequence analysis of Pseudomonas syringae pv. phaseolicola 1448A reveals divergence among pathovars in genes involved in virulence and transposition.</title>
        <authorList>
            <person name="Joardar V."/>
            <person name="Lindeberg M."/>
            <person name="Jackson R.W."/>
            <person name="Selengut J."/>
            <person name="Dodson R."/>
            <person name="Brinkac L.M."/>
            <person name="Daugherty S.C."/>
            <person name="DeBoy R.T."/>
            <person name="Durkin A.S."/>
            <person name="Gwinn Giglio M."/>
            <person name="Madupu R."/>
            <person name="Nelson W.C."/>
            <person name="Rosovitz M.J."/>
            <person name="Sullivan S.A."/>
            <person name="Crabtree J."/>
            <person name="Creasy T."/>
            <person name="Davidsen T.M."/>
            <person name="Haft D.H."/>
            <person name="Zafar N."/>
            <person name="Zhou L."/>
            <person name="Halpin R."/>
            <person name="Holley T."/>
            <person name="Khouri H.M."/>
            <person name="Feldblyum T.V."/>
            <person name="White O."/>
            <person name="Fraser C.M."/>
            <person name="Chatterjee A.K."/>
            <person name="Cartinhour S."/>
            <person name="Schneider D."/>
            <person name="Mansfield J.W."/>
            <person name="Collmer A."/>
            <person name="Buell R."/>
        </authorList>
    </citation>
    <scope>NUCLEOTIDE SEQUENCE [LARGE SCALE GENOMIC DNA]</scope>
    <source>
        <strain>1448A / Race 6</strain>
    </source>
</reference>
<gene>
    <name evidence="1" type="primary">clpX</name>
    <name type="ordered locus">PSPPH_1699</name>
</gene>
<comment type="function">
    <text evidence="1">ATP-dependent specificity component of the Clp protease. It directs the protease to specific substrates. Can perform chaperone functions in the absence of ClpP.</text>
</comment>
<comment type="subunit">
    <text evidence="1">Component of the ClpX-ClpP complex. Forms a hexameric ring that, in the presence of ATP, binds to fourteen ClpP subunits assembled into a disk-like structure with a central cavity, resembling the structure of eukaryotic proteasomes.</text>
</comment>
<comment type="similarity">
    <text evidence="1">Belongs to the ClpX chaperone family.</text>
</comment>
<organism>
    <name type="scientific">Pseudomonas savastanoi pv. phaseolicola (strain 1448A / Race 6)</name>
    <name type="common">Pseudomonas syringae pv. phaseolicola (strain 1448A / Race 6)</name>
    <dbReference type="NCBI Taxonomy" id="264730"/>
    <lineage>
        <taxon>Bacteria</taxon>
        <taxon>Pseudomonadati</taxon>
        <taxon>Pseudomonadota</taxon>
        <taxon>Gammaproteobacteria</taxon>
        <taxon>Pseudomonadales</taxon>
        <taxon>Pseudomonadaceae</taxon>
        <taxon>Pseudomonas</taxon>
    </lineage>
</organism>
<accession>Q48KY9</accession>
<protein>
    <recommendedName>
        <fullName evidence="1">ATP-dependent Clp protease ATP-binding subunit ClpX</fullName>
    </recommendedName>
</protein>
<dbReference type="EMBL" id="CP000058">
    <property type="protein sequence ID" value="AAZ34047.1"/>
    <property type="molecule type" value="Genomic_DNA"/>
</dbReference>
<dbReference type="RefSeq" id="WP_011168167.1">
    <property type="nucleotide sequence ID" value="NC_005773.3"/>
</dbReference>
<dbReference type="SMR" id="Q48KY9"/>
<dbReference type="KEGG" id="psp:PSPPH_1699"/>
<dbReference type="eggNOG" id="COG1219">
    <property type="taxonomic scope" value="Bacteria"/>
</dbReference>
<dbReference type="HOGENOM" id="CLU_014218_8_2_6"/>
<dbReference type="Proteomes" id="UP000000551">
    <property type="component" value="Chromosome"/>
</dbReference>
<dbReference type="GO" id="GO:0009376">
    <property type="term" value="C:HslUV protease complex"/>
    <property type="evidence" value="ECO:0007669"/>
    <property type="project" value="TreeGrafter"/>
</dbReference>
<dbReference type="GO" id="GO:0005524">
    <property type="term" value="F:ATP binding"/>
    <property type="evidence" value="ECO:0007669"/>
    <property type="project" value="UniProtKB-UniRule"/>
</dbReference>
<dbReference type="GO" id="GO:0016887">
    <property type="term" value="F:ATP hydrolysis activity"/>
    <property type="evidence" value="ECO:0007669"/>
    <property type="project" value="InterPro"/>
</dbReference>
<dbReference type="GO" id="GO:0140662">
    <property type="term" value="F:ATP-dependent protein folding chaperone"/>
    <property type="evidence" value="ECO:0007669"/>
    <property type="project" value="InterPro"/>
</dbReference>
<dbReference type="GO" id="GO:0046983">
    <property type="term" value="F:protein dimerization activity"/>
    <property type="evidence" value="ECO:0007669"/>
    <property type="project" value="InterPro"/>
</dbReference>
<dbReference type="GO" id="GO:0051082">
    <property type="term" value="F:unfolded protein binding"/>
    <property type="evidence" value="ECO:0007669"/>
    <property type="project" value="UniProtKB-UniRule"/>
</dbReference>
<dbReference type="GO" id="GO:0008270">
    <property type="term" value="F:zinc ion binding"/>
    <property type="evidence" value="ECO:0007669"/>
    <property type="project" value="InterPro"/>
</dbReference>
<dbReference type="GO" id="GO:0051301">
    <property type="term" value="P:cell division"/>
    <property type="evidence" value="ECO:0007669"/>
    <property type="project" value="TreeGrafter"/>
</dbReference>
<dbReference type="GO" id="GO:0051603">
    <property type="term" value="P:proteolysis involved in protein catabolic process"/>
    <property type="evidence" value="ECO:0007669"/>
    <property type="project" value="TreeGrafter"/>
</dbReference>
<dbReference type="CDD" id="cd19497">
    <property type="entry name" value="RecA-like_ClpX"/>
    <property type="match status" value="1"/>
</dbReference>
<dbReference type="FunFam" id="1.10.8.60:FF:000002">
    <property type="entry name" value="ATP-dependent Clp protease ATP-binding subunit ClpX"/>
    <property type="match status" value="1"/>
</dbReference>
<dbReference type="FunFam" id="3.40.50.300:FF:000005">
    <property type="entry name" value="ATP-dependent Clp protease ATP-binding subunit ClpX"/>
    <property type="match status" value="1"/>
</dbReference>
<dbReference type="Gene3D" id="1.10.8.60">
    <property type="match status" value="1"/>
</dbReference>
<dbReference type="Gene3D" id="6.20.220.10">
    <property type="entry name" value="ClpX chaperone, C4-type zinc finger domain"/>
    <property type="match status" value="1"/>
</dbReference>
<dbReference type="Gene3D" id="3.40.50.300">
    <property type="entry name" value="P-loop containing nucleotide triphosphate hydrolases"/>
    <property type="match status" value="1"/>
</dbReference>
<dbReference type="HAMAP" id="MF_00175">
    <property type="entry name" value="ClpX"/>
    <property type="match status" value="1"/>
</dbReference>
<dbReference type="InterPro" id="IPR003593">
    <property type="entry name" value="AAA+_ATPase"/>
</dbReference>
<dbReference type="InterPro" id="IPR050052">
    <property type="entry name" value="ATP-dep_Clp_protease_ClpX"/>
</dbReference>
<dbReference type="InterPro" id="IPR003959">
    <property type="entry name" value="ATPase_AAA_core"/>
</dbReference>
<dbReference type="InterPro" id="IPR019489">
    <property type="entry name" value="Clp_ATPase_C"/>
</dbReference>
<dbReference type="InterPro" id="IPR004487">
    <property type="entry name" value="Clp_protease_ATP-bd_su_ClpX"/>
</dbReference>
<dbReference type="InterPro" id="IPR046425">
    <property type="entry name" value="ClpX_bact"/>
</dbReference>
<dbReference type="InterPro" id="IPR027417">
    <property type="entry name" value="P-loop_NTPase"/>
</dbReference>
<dbReference type="InterPro" id="IPR010603">
    <property type="entry name" value="Znf_CppX_C4"/>
</dbReference>
<dbReference type="InterPro" id="IPR038366">
    <property type="entry name" value="Znf_CppX_C4_sf"/>
</dbReference>
<dbReference type="NCBIfam" id="TIGR00382">
    <property type="entry name" value="clpX"/>
    <property type="match status" value="1"/>
</dbReference>
<dbReference type="NCBIfam" id="NF003745">
    <property type="entry name" value="PRK05342.1"/>
    <property type="match status" value="1"/>
</dbReference>
<dbReference type="PANTHER" id="PTHR48102:SF7">
    <property type="entry name" value="ATP-DEPENDENT CLP PROTEASE ATP-BINDING SUBUNIT CLPX-LIKE, MITOCHONDRIAL"/>
    <property type="match status" value="1"/>
</dbReference>
<dbReference type="PANTHER" id="PTHR48102">
    <property type="entry name" value="ATP-DEPENDENT CLP PROTEASE ATP-BINDING SUBUNIT CLPX-LIKE, MITOCHONDRIAL-RELATED"/>
    <property type="match status" value="1"/>
</dbReference>
<dbReference type="Pfam" id="PF07724">
    <property type="entry name" value="AAA_2"/>
    <property type="match status" value="1"/>
</dbReference>
<dbReference type="Pfam" id="PF10431">
    <property type="entry name" value="ClpB_D2-small"/>
    <property type="match status" value="1"/>
</dbReference>
<dbReference type="Pfam" id="PF06689">
    <property type="entry name" value="zf-C4_ClpX"/>
    <property type="match status" value="1"/>
</dbReference>
<dbReference type="SMART" id="SM00382">
    <property type="entry name" value="AAA"/>
    <property type="match status" value="1"/>
</dbReference>
<dbReference type="SMART" id="SM01086">
    <property type="entry name" value="ClpB_D2-small"/>
    <property type="match status" value="1"/>
</dbReference>
<dbReference type="SMART" id="SM00994">
    <property type="entry name" value="zf-C4_ClpX"/>
    <property type="match status" value="1"/>
</dbReference>
<dbReference type="SUPFAM" id="SSF57716">
    <property type="entry name" value="Glucocorticoid receptor-like (DNA-binding domain)"/>
    <property type="match status" value="1"/>
</dbReference>
<dbReference type="SUPFAM" id="SSF52540">
    <property type="entry name" value="P-loop containing nucleoside triphosphate hydrolases"/>
    <property type="match status" value="1"/>
</dbReference>
<dbReference type="PROSITE" id="PS51902">
    <property type="entry name" value="CLPX_ZB"/>
    <property type="match status" value="1"/>
</dbReference>
<feature type="chain" id="PRO_1000024619" description="ATP-dependent Clp protease ATP-binding subunit ClpX">
    <location>
        <begin position="1"/>
        <end position="427"/>
    </location>
</feature>
<feature type="domain" description="ClpX-type ZB" evidence="2">
    <location>
        <begin position="4"/>
        <end position="57"/>
    </location>
</feature>
<feature type="binding site" evidence="2">
    <location>
        <position position="16"/>
    </location>
    <ligand>
        <name>Zn(2+)</name>
        <dbReference type="ChEBI" id="CHEBI:29105"/>
    </ligand>
</feature>
<feature type="binding site" evidence="2">
    <location>
        <position position="19"/>
    </location>
    <ligand>
        <name>Zn(2+)</name>
        <dbReference type="ChEBI" id="CHEBI:29105"/>
    </ligand>
</feature>
<feature type="binding site" evidence="2">
    <location>
        <position position="38"/>
    </location>
    <ligand>
        <name>Zn(2+)</name>
        <dbReference type="ChEBI" id="CHEBI:29105"/>
    </ligand>
</feature>
<feature type="binding site" evidence="2">
    <location>
        <position position="41"/>
    </location>
    <ligand>
        <name>Zn(2+)</name>
        <dbReference type="ChEBI" id="CHEBI:29105"/>
    </ligand>
</feature>
<feature type="binding site" evidence="1">
    <location>
        <begin position="122"/>
        <end position="129"/>
    </location>
    <ligand>
        <name>ATP</name>
        <dbReference type="ChEBI" id="CHEBI:30616"/>
    </ligand>
</feature>
<sequence length="427" mass="46943">MTDTRNGEDNGKLLYCSFCGKSQHEVRKLIAGPSVFICDECVDLCNDIIREEVQEAQAESSAHKLPSPKEISGILDQYVIGQERAKKVLAVAVYNHYKRLNQRDKKNDDVELGKSNILLIGPTGSGKTLLAETLARLLNVPFTIADATTLTEAGYVGEDVENIIQKLLQKCDYDVDKAQMGIVYIDEIDKISRKSDNPSITRDVSGEGVQQALLKLIEGTVASVPPQGGRKHPQQEFLQVDTRNILFICGGAFSGLEKVIQNRSTRGGIGFNAEVRSKEEGKKVGESLREVEPDDLVKFGLIPEFVGRLPVLATLDELDEAALIQILTEPKNALTKQYAKLFEMEGVDLEFRTDALKSVARRALERKTGARGLRSILEGVLLDTMYEIPSQSDVSKVVIDESVIDGTSKPLLIYENSEPPAKVAPDA</sequence>